<sequence length="282" mass="30482">MTLIDGKKLSIDLKERLTDQLREYKEQTGIVPKLVAIIVGDDPASKTYVGSKEKACEKVGINSEVITLPEATTEQELLELIDKLNDDSSVHAILVQLPLPTHINKQKVIYAIKPEKDVDGFHPANVGRLQLRDKKCLESCTPKGILTMLKEYGIQTEGAHAVVVGASNVVGKPVSQLLLNAKATVTTCHRFTKDLKSHTTKADILVVAVGKPGFITADMVKDGAVVIDVGINHVDGKIVGDVDFEAVKDKVAAITPVPGGVGPMTITELLYNTFQCAQELNR</sequence>
<comment type="function">
    <text evidence="1">Catalyzes the oxidation of 5,10-methylenetetrahydrofolate to 5,10-methenyltetrahydrofolate and then the hydrolysis of 5,10-methenyltetrahydrofolate to 10-formyltetrahydrofolate.</text>
</comment>
<comment type="catalytic activity">
    <reaction evidence="1">
        <text>(6R)-5,10-methylene-5,6,7,8-tetrahydrofolate + NADP(+) = (6R)-5,10-methenyltetrahydrofolate + NADPH</text>
        <dbReference type="Rhea" id="RHEA:22812"/>
        <dbReference type="ChEBI" id="CHEBI:15636"/>
        <dbReference type="ChEBI" id="CHEBI:57455"/>
        <dbReference type="ChEBI" id="CHEBI:57783"/>
        <dbReference type="ChEBI" id="CHEBI:58349"/>
        <dbReference type="EC" id="1.5.1.5"/>
    </reaction>
</comment>
<comment type="catalytic activity">
    <reaction evidence="1">
        <text>(6R)-5,10-methenyltetrahydrofolate + H2O = (6R)-10-formyltetrahydrofolate + H(+)</text>
        <dbReference type="Rhea" id="RHEA:23700"/>
        <dbReference type="ChEBI" id="CHEBI:15377"/>
        <dbReference type="ChEBI" id="CHEBI:15378"/>
        <dbReference type="ChEBI" id="CHEBI:57455"/>
        <dbReference type="ChEBI" id="CHEBI:195366"/>
        <dbReference type="EC" id="3.5.4.9"/>
    </reaction>
</comment>
<comment type="pathway">
    <text evidence="1">One-carbon metabolism; tetrahydrofolate interconversion.</text>
</comment>
<comment type="subunit">
    <text evidence="1">Homodimer.</text>
</comment>
<comment type="similarity">
    <text evidence="1">Belongs to the tetrahydrofolate dehydrogenase/cyclohydrolase family.</text>
</comment>
<name>FOLD_FRAP2</name>
<accession>B0U009</accession>
<protein>
    <recommendedName>
        <fullName evidence="1">Bifunctional protein FolD</fullName>
    </recommendedName>
    <domain>
        <recommendedName>
            <fullName evidence="1">Methylenetetrahydrofolate dehydrogenase</fullName>
            <ecNumber evidence="1">1.5.1.5</ecNumber>
        </recommendedName>
    </domain>
    <domain>
        <recommendedName>
            <fullName evidence="1">Methenyltetrahydrofolate cyclohydrolase</fullName>
            <ecNumber evidence="1">3.5.4.9</ecNumber>
        </recommendedName>
    </domain>
</protein>
<evidence type="ECO:0000255" key="1">
    <source>
        <dbReference type="HAMAP-Rule" id="MF_01576"/>
    </source>
</evidence>
<reference key="1">
    <citation type="submission" date="2007-12" db="EMBL/GenBank/DDBJ databases">
        <title>Complete sequence of chromosome of Francisella philomiragia subsp. philomiragia ATCC 25017.</title>
        <authorList>
            <consortium name="US DOE Joint Genome Institute"/>
            <person name="Copeland A."/>
            <person name="Lucas S."/>
            <person name="Lapidus A."/>
            <person name="Barry K."/>
            <person name="Detter J.C."/>
            <person name="Glavina del Rio T."/>
            <person name="Hammon N."/>
            <person name="Israni S."/>
            <person name="Dalin E."/>
            <person name="Tice H."/>
            <person name="Pitluck S."/>
            <person name="Chain P."/>
            <person name="Malfatti S."/>
            <person name="Shin M."/>
            <person name="Vergez L."/>
            <person name="Schmutz J."/>
            <person name="Larimer F."/>
            <person name="Land M."/>
            <person name="Hauser L."/>
            <person name="Richardson P."/>
        </authorList>
    </citation>
    <scope>NUCLEOTIDE SEQUENCE [LARGE SCALE GENOMIC DNA]</scope>
    <source>
        <strain>ATCC 25017 / CCUG 19701 / FSC 153 / O#319-036</strain>
    </source>
</reference>
<gene>
    <name evidence="1" type="primary">folD</name>
    <name type="ordered locus">Fphi_0420</name>
</gene>
<organism>
    <name type="scientific">Francisella philomiragia subsp. philomiragia (strain ATCC 25017 / CCUG 19701 / FSC 153 / O#319-036)</name>
    <dbReference type="NCBI Taxonomy" id="484022"/>
    <lineage>
        <taxon>Bacteria</taxon>
        <taxon>Pseudomonadati</taxon>
        <taxon>Pseudomonadota</taxon>
        <taxon>Gammaproteobacteria</taxon>
        <taxon>Thiotrichales</taxon>
        <taxon>Francisellaceae</taxon>
        <taxon>Francisella</taxon>
    </lineage>
</organism>
<feature type="chain" id="PRO_1000087902" description="Bifunctional protein FolD">
    <location>
        <begin position="1"/>
        <end position="282"/>
    </location>
</feature>
<feature type="binding site" evidence="1">
    <location>
        <begin position="165"/>
        <end position="167"/>
    </location>
    <ligand>
        <name>NADP(+)</name>
        <dbReference type="ChEBI" id="CHEBI:58349"/>
    </ligand>
</feature>
<feature type="binding site" evidence="1">
    <location>
        <position position="231"/>
    </location>
    <ligand>
        <name>NADP(+)</name>
        <dbReference type="ChEBI" id="CHEBI:58349"/>
    </ligand>
</feature>
<dbReference type="EC" id="1.5.1.5" evidence="1"/>
<dbReference type="EC" id="3.5.4.9" evidence="1"/>
<dbReference type="EMBL" id="CP000937">
    <property type="protein sequence ID" value="ABZ86638.1"/>
    <property type="molecule type" value="Genomic_DNA"/>
</dbReference>
<dbReference type="SMR" id="B0U009"/>
<dbReference type="KEGG" id="fph:Fphi_0420"/>
<dbReference type="eggNOG" id="COG0190">
    <property type="taxonomic scope" value="Bacteria"/>
</dbReference>
<dbReference type="HOGENOM" id="CLU_034045_2_1_6"/>
<dbReference type="UniPathway" id="UPA00193"/>
<dbReference type="GO" id="GO:0005829">
    <property type="term" value="C:cytosol"/>
    <property type="evidence" value="ECO:0007669"/>
    <property type="project" value="TreeGrafter"/>
</dbReference>
<dbReference type="GO" id="GO:0004477">
    <property type="term" value="F:methenyltetrahydrofolate cyclohydrolase activity"/>
    <property type="evidence" value="ECO:0007669"/>
    <property type="project" value="UniProtKB-UniRule"/>
</dbReference>
<dbReference type="GO" id="GO:0004488">
    <property type="term" value="F:methylenetetrahydrofolate dehydrogenase (NADP+) activity"/>
    <property type="evidence" value="ECO:0007669"/>
    <property type="project" value="UniProtKB-UniRule"/>
</dbReference>
<dbReference type="GO" id="GO:0000105">
    <property type="term" value="P:L-histidine biosynthetic process"/>
    <property type="evidence" value="ECO:0007669"/>
    <property type="project" value="UniProtKB-KW"/>
</dbReference>
<dbReference type="GO" id="GO:0009086">
    <property type="term" value="P:methionine biosynthetic process"/>
    <property type="evidence" value="ECO:0007669"/>
    <property type="project" value="UniProtKB-KW"/>
</dbReference>
<dbReference type="GO" id="GO:0006164">
    <property type="term" value="P:purine nucleotide biosynthetic process"/>
    <property type="evidence" value="ECO:0007669"/>
    <property type="project" value="UniProtKB-KW"/>
</dbReference>
<dbReference type="GO" id="GO:0035999">
    <property type="term" value="P:tetrahydrofolate interconversion"/>
    <property type="evidence" value="ECO:0007669"/>
    <property type="project" value="UniProtKB-UniRule"/>
</dbReference>
<dbReference type="CDD" id="cd01080">
    <property type="entry name" value="NAD_bind_m-THF_DH_Cyclohyd"/>
    <property type="match status" value="1"/>
</dbReference>
<dbReference type="FunFam" id="3.40.50.720:FF:000094">
    <property type="entry name" value="Bifunctional protein FolD"/>
    <property type="match status" value="1"/>
</dbReference>
<dbReference type="FunFam" id="3.40.50.10860:FF:000005">
    <property type="entry name" value="C-1-tetrahydrofolate synthase, cytoplasmic, putative"/>
    <property type="match status" value="1"/>
</dbReference>
<dbReference type="Gene3D" id="3.40.50.10860">
    <property type="entry name" value="Leucine Dehydrogenase, chain A, domain 1"/>
    <property type="match status" value="1"/>
</dbReference>
<dbReference type="Gene3D" id="3.40.50.720">
    <property type="entry name" value="NAD(P)-binding Rossmann-like Domain"/>
    <property type="match status" value="1"/>
</dbReference>
<dbReference type="HAMAP" id="MF_01576">
    <property type="entry name" value="THF_DHG_CYH"/>
    <property type="match status" value="1"/>
</dbReference>
<dbReference type="InterPro" id="IPR046346">
    <property type="entry name" value="Aminoacid_DH-like_N_sf"/>
</dbReference>
<dbReference type="InterPro" id="IPR036291">
    <property type="entry name" value="NAD(P)-bd_dom_sf"/>
</dbReference>
<dbReference type="InterPro" id="IPR000672">
    <property type="entry name" value="THF_DH/CycHdrlase"/>
</dbReference>
<dbReference type="InterPro" id="IPR020630">
    <property type="entry name" value="THF_DH/CycHdrlase_cat_dom"/>
</dbReference>
<dbReference type="InterPro" id="IPR020867">
    <property type="entry name" value="THF_DH/CycHdrlase_CS"/>
</dbReference>
<dbReference type="InterPro" id="IPR020631">
    <property type="entry name" value="THF_DH/CycHdrlase_NAD-bd_dom"/>
</dbReference>
<dbReference type="NCBIfam" id="NF008058">
    <property type="entry name" value="PRK10792.1"/>
    <property type="match status" value="1"/>
</dbReference>
<dbReference type="NCBIfam" id="NF010777">
    <property type="entry name" value="PRK14180.1"/>
    <property type="match status" value="1"/>
</dbReference>
<dbReference type="NCBIfam" id="NF010783">
    <property type="entry name" value="PRK14186.1"/>
    <property type="match status" value="1"/>
</dbReference>
<dbReference type="PANTHER" id="PTHR48099:SF5">
    <property type="entry name" value="C-1-TETRAHYDROFOLATE SYNTHASE, CYTOPLASMIC"/>
    <property type="match status" value="1"/>
</dbReference>
<dbReference type="PANTHER" id="PTHR48099">
    <property type="entry name" value="C-1-TETRAHYDROFOLATE SYNTHASE, CYTOPLASMIC-RELATED"/>
    <property type="match status" value="1"/>
</dbReference>
<dbReference type="Pfam" id="PF00763">
    <property type="entry name" value="THF_DHG_CYH"/>
    <property type="match status" value="1"/>
</dbReference>
<dbReference type="Pfam" id="PF02882">
    <property type="entry name" value="THF_DHG_CYH_C"/>
    <property type="match status" value="1"/>
</dbReference>
<dbReference type="PRINTS" id="PR00085">
    <property type="entry name" value="THFDHDRGNASE"/>
</dbReference>
<dbReference type="SUPFAM" id="SSF53223">
    <property type="entry name" value="Aminoacid dehydrogenase-like, N-terminal domain"/>
    <property type="match status" value="1"/>
</dbReference>
<dbReference type="SUPFAM" id="SSF51735">
    <property type="entry name" value="NAD(P)-binding Rossmann-fold domains"/>
    <property type="match status" value="1"/>
</dbReference>
<dbReference type="PROSITE" id="PS00766">
    <property type="entry name" value="THF_DHG_CYH_1"/>
    <property type="match status" value="1"/>
</dbReference>
<dbReference type="PROSITE" id="PS00767">
    <property type="entry name" value="THF_DHG_CYH_2"/>
    <property type="match status" value="1"/>
</dbReference>
<proteinExistence type="inferred from homology"/>
<keyword id="KW-0028">Amino-acid biosynthesis</keyword>
<keyword id="KW-0368">Histidine biosynthesis</keyword>
<keyword id="KW-0378">Hydrolase</keyword>
<keyword id="KW-0486">Methionine biosynthesis</keyword>
<keyword id="KW-0511">Multifunctional enzyme</keyword>
<keyword id="KW-0521">NADP</keyword>
<keyword id="KW-0554">One-carbon metabolism</keyword>
<keyword id="KW-0560">Oxidoreductase</keyword>
<keyword id="KW-0658">Purine biosynthesis</keyword>